<proteinExistence type="evidence at protein level"/>
<keyword id="KW-1283">Bacterial microcompartment</keyword>
<keyword id="KW-0408">Iron</keyword>
<keyword id="KW-1185">Reference proteome</keyword>
<protein>
    <recommendedName>
        <fullName evidence="11">Bacterial microcompartment shell protein PduK</fullName>
    </recommendedName>
    <alternativeName>
        <fullName>Propanediol utilization protein PduK</fullName>
    </alternativeName>
</protein>
<dbReference type="EMBL" id="AF026270">
    <property type="protein sequence ID" value="AAD39010.1"/>
    <property type="molecule type" value="Genomic_DNA"/>
</dbReference>
<dbReference type="EMBL" id="AE006468">
    <property type="protein sequence ID" value="AAL20950.1"/>
    <property type="molecule type" value="Genomic_DNA"/>
</dbReference>
<dbReference type="RefSeq" id="NP_460991.3">
    <property type="nucleotide sequence ID" value="NC_003197.2"/>
</dbReference>
<dbReference type="RefSeq" id="WP_001284390.1">
    <property type="nucleotide sequence ID" value="NC_003197.2"/>
</dbReference>
<dbReference type="SMR" id="Q9XDN6"/>
<dbReference type="STRING" id="99287.STM2046"/>
<dbReference type="PaxDb" id="99287-STM2046"/>
<dbReference type="GeneID" id="1253567"/>
<dbReference type="KEGG" id="stm:STM2046"/>
<dbReference type="HOGENOM" id="CLU_064903_3_3_6"/>
<dbReference type="PhylomeDB" id="Q9XDN6"/>
<dbReference type="BioCyc" id="SENT99287:STM2046-MONOMER"/>
<dbReference type="UniPathway" id="UPA00621"/>
<dbReference type="Proteomes" id="UP000001014">
    <property type="component" value="Chromosome"/>
</dbReference>
<dbReference type="GO" id="GO:0031472">
    <property type="term" value="C:propanediol degradation polyhedral organelle"/>
    <property type="evidence" value="ECO:0000314"/>
    <property type="project" value="UniProtKB"/>
</dbReference>
<dbReference type="GO" id="GO:0051144">
    <property type="term" value="P:propanediol catabolic process"/>
    <property type="evidence" value="ECO:0007669"/>
    <property type="project" value="UniProtKB-UniPathway"/>
</dbReference>
<dbReference type="CDD" id="cd07056">
    <property type="entry name" value="BMC_PduK"/>
    <property type="match status" value="1"/>
</dbReference>
<dbReference type="Gene3D" id="3.30.70.1710">
    <property type="match status" value="1"/>
</dbReference>
<dbReference type="InterPro" id="IPR000249">
    <property type="entry name" value="BMC_dom"/>
</dbReference>
<dbReference type="InterPro" id="IPR050575">
    <property type="entry name" value="BMC_shell"/>
</dbReference>
<dbReference type="InterPro" id="IPR037233">
    <property type="entry name" value="CcmK-like_sf"/>
</dbReference>
<dbReference type="InterPro" id="IPR044872">
    <property type="entry name" value="CcmK/CsoS1_BMC"/>
</dbReference>
<dbReference type="PANTHER" id="PTHR33941:SF11">
    <property type="entry name" value="BACTERIAL MICROCOMPARTMENT SHELL PROTEIN PDUJ"/>
    <property type="match status" value="1"/>
</dbReference>
<dbReference type="PANTHER" id="PTHR33941">
    <property type="entry name" value="PROPANEDIOL UTILIZATION PROTEIN PDUA"/>
    <property type="match status" value="1"/>
</dbReference>
<dbReference type="Pfam" id="PF00936">
    <property type="entry name" value="BMC"/>
    <property type="match status" value="1"/>
</dbReference>
<dbReference type="SMART" id="SM00877">
    <property type="entry name" value="BMC"/>
    <property type="match status" value="1"/>
</dbReference>
<dbReference type="SUPFAM" id="SSF143414">
    <property type="entry name" value="CcmK-like"/>
    <property type="match status" value="1"/>
</dbReference>
<dbReference type="PROSITE" id="PS51930">
    <property type="entry name" value="BMC_2"/>
    <property type="match status" value="1"/>
</dbReference>
<organism>
    <name type="scientific">Salmonella typhimurium (strain LT2 / SGSC1412 / ATCC 700720)</name>
    <dbReference type="NCBI Taxonomy" id="99287"/>
    <lineage>
        <taxon>Bacteria</taxon>
        <taxon>Pseudomonadati</taxon>
        <taxon>Pseudomonadota</taxon>
        <taxon>Gammaproteobacteria</taxon>
        <taxon>Enterobacterales</taxon>
        <taxon>Enterobacteriaceae</taxon>
        <taxon>Salmonella</taxon>
    </lineage>
</organism>
<feature type="chain" id="PRO_0000454254" description="Bacterial microcompartment shell protein PduK">
    <location>
        <begin position="1"/>
        <end position="160"/>
    </location>
</feature>
<feature type="domain" description="BMC" evidence="2">
    <location>
        <begin position="11"/>
        <end position="96"/>
    </location>
</feature>
<name>PDUK_SALTY</name>
<gene>
    <name evidence="10" type="primary">pduK</name>
    <name type="ordered locus">STM2046</name>
</gene>
<reference key="1">
    <citation type="journal article" date="1999" name="J. Bacteriol.">
        <title>The propanediol utilization (pdu) operon of Salmonella enterica serovar typhimurium LT2 includes genes necessary for formation of polyhedral organelles involved in coenzyme B(12)-dependent 1, 2-propanediol degradation.</title>
        <authorList>
            <person name="Bobik T.A."/>
            <person name="Havemann G.D."/>
            <person name="Busch R.J."/>
            <person name="Williams D.S."/>
            <person name="Aldrich H.C."/>
        </authorList>
    </citation>
    <scope>NUCLEOTIDE SEQUENCE [GENOMIC DNA]</scope>
    <scope>PATHWAY</scope>
    <scope>INDUCTION</scope>
    <source>
        <strain>LT2</strain>
    </source>
</reference>
<reference key="2">
    <citation type="journal article" date="2001" name="Nature">
        <title>Complete genome sequence of Salmonella enterica serovar Typhimurium LT2.</title>
        <authorList>
            <person name="McClelland M."/>
            <person name="Sanderson K.E."/>
            <person name="Spieth J."/>
            <person name="Clifton S.W."/>
            <person name="Latreille P."/>
            <person name="Courtney L."/>
            <person name="Porwollik S."/>
            <person name="Ali J."/>
            <person name="Dante M."/>
            <person name="Du F."/>
            <person name="Hou S."/>
            <person name="Layman D."/>
            <person name="Leonard S."/>
            <person name="Nguyen C."/>
            <person name="Scott K."/>
            <person name="Holmes A."/>
            <person name="Grewal N."/>
            <person name="Mulvaney E."/>
            <person name="Ryan E."/>
            <person name="Sun H."/>
            <person name="Florea L."/>
            <person name="Miller W."/>
            <person name="Stoneking T."/>
            <person name="Nhan M."/>
            <person name="Waterston R."/>
            <person name="Wilson R.K."/>
        </authorList>
    </citation>
    <scope>NUCLEOTIDE SEQUENCE [LARGE SCALE GENOMIC DNA]</scope>
    <source>
        <strain>LT2 / SGSC1412 / ATCC 700720</strain>
    </source>
</reference>
<reference key="3">
    <citation type="journal article" date="2003" name="J. Bacteriol.">
        <title>Protein content of polyhedral organelles involved in coenzyme B12-dependent degradation of 1,2-propanediol in Salmonella enterica serovar Typhimurium LT2.</title>
        <authorList>
            <person name="Havemann G.D."/>
            <person name="Bobik T.A."/>
        </authorList>
    </citation>
    <scope>IDENTIFICATION BY MASS SPECTROMETRY</scope>
    <scope>FUNCTION</scope>
    <scope>SUBCELLULAR LOCATION</scope>
    <source>
        <strain>LT2</strain>
    </source>
</reference>
<reference key="4">
    <citation type="journal article" date="2006" name="J. Bacteriol.">
        <title>Conserving a volatile metabolite: a role for carboxysome-like organelles in Salmonella enterica.</title>
        <authorList>
            <person name="Penrod J.T."/>
            <person name="Roth J.R."/>
        </authorList>
    </citation>
    <scope>FUNCTION</scope>
    <scope>DISRUPTION PHENOTYPE</scope>
    <source>
        <strain>LT2</strain>
    </source>
</reference>
<reference key="5">
    <citation type="journal article" date="2008" name="J. Bacteriol.">
        <title>Microcompartments for B12-dependent 1,2-propanediol degradation provide protection from DNA and cellular damage by a reactive metabolic intermediate.</title>
        <authorList>
            <person name="Sampson E.M."/>
            <person name="Bobik T.A."/>
        </authorList>
    </citation>
    <scope>DISRUPTION PHENOTYPE</scope>
    <source>
        <strain>LT2</strain>
    </source>
</reference>
<reference key="6">
    <citation type="journal article" date="2011" name="J. Bacteriol.">
        <title>Genetic analysis of the protein shell of the microcompartments involved in coenzyme B12-dependent 1,2-propanediol degradation by Salmonella.</title>
        <authorList>
            <person name="Cheng S."/>
            <person name="Sinha S."/>
            <person name="Fan C."/>
            <person name="Liu Y."/>
            <person name="Bobik T.A."/>
        </authorList>
    </citation>
    <scope>FUNCTION</scope>
    <scope>DISRUPTION PHENOTYPE</scope>
    <source>
        <strain>LT2</strain>
    </source>
</reference>
<reference key="7">
    <citation type="journal article" date="2010" name="J. Biol. Chem.">
        <title>Structural insight into the mechanisms of transport across the Salmonella enterica Pdu microcompartment shell.</title>
        <authorList>
            <person name="Crowley C.S."/>
            <person name="Cascio D."/>
            <person name="Sawaya M.R."/>
            <person name="Kopstein J.S."/>
            <person name="Bobik T.A."/>
            <person name="Yeates T.O."/>
        </authorList>
    </citation>
    <scope>POSSIBLE COFACTOR</scope>
</reference>
<reference key="8">
    <citation type="journal article" date="2013" name="Microbiology">
        <title>A synthetic system for expression of components of a bacterial microcompartment.</title>
        <authorList>
            <person name="Sargent F."/>
            <person name="Davidson F.A."/>
            <person name="Kelly C.L."/>
            <person name="Binny R."/>
            <person name="Christodoulides N."/>
            <person name="Gibson D."/>
            <person name="Johansson E."/>
            <person name="Kozyrska K."/>
            <person name="Lado L.L."/>
            <person name="MacCallum J."/>
            <person name="Montague R."/>
            <person name="Ortmann B."/>
            <person name="Owen R."/>
            <person name="Coulthurst S.J."/>
            <person name="Dupuy L."/>
            <person name="Prescott A.R."/>
            <person name="Palmer T."/>
        </authorList>
    </citation>
    <scope>BIOTECHNOLOGY (ARTIFICIAL BMCS)</scope>
    <source>
        <strain>LT2</strain>
    </source>
</reference>
<reference key="9">
    <citation type="journal article" date="2017" name="PLoS Comput. Biol.">
        <title>A systems-level model reveals that 1,2-Propanediol utilization microcompartments enhance pathway flux through intermediate sequestration.</title>
        <authorList>
            <person name="Jakobson C.M."/>
            <person name="Tullman-Ercek D."/>
            <person name="Slininger M.F."/>
            <person name="Mangan N.M."/>
        </authorList>
    </citation>
    <scope>SYSTEM-MODELING</scope>
    <scope>FUNCTION</scope>
    <source>
        <strain>LT2</strain>
    </source>
</reference>
<sequence length="160" mass="16806">MANKEHRVKQSLGLLEVCGLALAISCADIMAKSASITLLALEKTNGSGWMVIKITGDVASVQAAITTGAHFAEQWNGLVAHKVIARPGEGILLAETPSPSVIEPEPEASEIADVVSEAPAEEAPQESELVSCNLCLDPKCPRQKGEPRTLCIHSGKRGEA</sequence>
<comment type="function">
    <text evidence="4 8">A minor shell protein of the bacterial microcompartment (BMC) dedicated to 1,2-propanediol (1,2-PD) degradation. The isolated BMC shell component protein ratio for J:A:B':B:K:T:U is approximately 15:10:7:6:1:1:2 (PubMed:12923081). Not required for structural integrity of BMCs nor to mitigate propionaldehyde toxicity, it might be involved in spatial organization of BMCs (PubMed:21239588).</text>
</comment>
<comment type="function">
    <text evidence="6 14">The 1,2-PD-specific bacterial microcompartment (BMC) concentrates low levels of 1,2-PD catabolic enzymes, concentrates volatile reaction intermediates thus enhancing pathway flux and keeps the level of toxic, mutagenic propionaldehyde low.</text>
</comment>
<comment type="cofactor">
    <cofactor evidence="7">
        <name>Fe cation</name>
        <dbReference type="ChEBI" id="CHEBI:24875"/>
    </cofactor>
    <text evidence="7 13">The C-terminal 70 residues (positions 90-160) when overexpressed in E.coli bind Fe (PubMed:20870711). Might bind an [Fe-S] cluster in vivo (Probable).</text>
</comment>
<comment type="pathway">
    <text evidence="12">Polyol metabolism; 1,2-propanediol degradation.</text>
</comment>
<comment type="subunit">
    <text evidence="1">Interacts with shell proteins PduA and PduP and assembly protein PduM.</text>
</comment>
<comment type="subcellular location">
    <subcellularLocation>
        <location evidence="4">Bacterial microcompartment</location>
    </subcellularLocation>
</comment>
<comment type="induction">
    <text evidence="3">BMC production is induced by growth on 1,2-PD vitamin B12 medium.</text>
</comment>
<comment type="disruption phenotype">
    <text evidence="5 6 8">Releases increased amounts of acetaldehyde when grown on propanediol (PubMed:16585748). Half the cells seem to form BMC aggregates with visible shells, the other half have no BMCs. Grows normally on 1,2-PD and vitamin B12 (PubMed:21239588). A double pduJ-pduK strain grows in an interrupted manner on 1,2-PD and vitamin B12; grows for a while then stops, then restarts as toxic propionaldehyde accumulates and then decreases (PubMed:18296526).</text>
</comment>
<comment type="biotechnology">
    <text evidence="9">Artificial BMCs can be made in E.coli by expressing pduA-pduB/B'-pduT-pduU-pduN-pduJ-pduK (in this order). Enzymes can be targeted to the BMC, and appear to be encapsulated within it.</text>
</comment>
<comment type="miscellaneous">
    <text evidence="3 4">Bacterial microcompartments (BMC) 100-200 nm in cross section are formed during aerobic growth on minimal 1,2-PD-B12 or anaerobic growth on 1,2-PD-tetrathionate medium, but not during aerobic growth on glucose, anerobic growth on glucose or pyruvate-tetrathionate (PubMed:10498708). BMCs can constitute up to 10% of total cell protein (PubMed:12923081).</text>
</comment>
<comment type="similarity">
    <text evidence="2">Belongs to the bacterial microcompartments protein family.</text>
</comment>
<accession>Q9XDN6</accession>
<accession>Q7BV80</accession>
<evidence type="ECO:0000250" key="1">
    <source>
        <dbReference type="UniProtKB" id="B1VB70"/>
    </source>
</evidence>
<evidence type="ECO:0000255" key="2">
    <source>
        <dbReference type="PROSITE-ProRule" id="PRU01278"/>
    </source>
</evidence>
<evidence type="ECO:0000269" key="3">
    <source>
    </source>
</evidence>
<evidence type="ECO:0000269" key="4">
    <source>
    </source>
</evidence>
<evidence type="ECO:0000269" key="5">
    <source>
    </source>
</evidence>
<evidence type="ECO:0000269" key="6">
    <source>
    </source>
</evidence>
<evidence type="ECO:0000269" key="7">
    <source>
    </source>
</evidence>
<evidence type="ECO:0000269" key="8">
    <source>
    </source>
</evidence>
<evidence type="ECO:0000269" key="9">
    <source>
    </source>
</evidence>
<evidence type="ECO:0000303" key="10">
    <source>
    </source>
</evidence>
<evidence type="ECO:0000303" key="11">
    <source>
    </source>
</evidence>
<evidence type="ECO:0000305" key="12">
    <source>
    </source>
</evidence>
<evidence type="ECO:0000305" key="13">
    <source>
    </source>
</evidence>
<evidence type="ECO:0000305" key="14">
    <source>
    </source>
</evidence>